<organism>
    <name type="scientific">Escherichia coli (strain K12)</name>
    <dbReference type="NCBI Taxonomy" id="83333"/>
    <lineage>
        <taxon>Bacteria</taxon>
        <taxon>Pseudomonadati</taxon>
        <taxon>Pseudomonadota</taxon>
        <taxon>Gammaproteobacteria</taxon>
        <taxon>Enterobacterales</taxon>
        <taxon>Enterobacteriaceae</taxon>
        <taxon>Escherichia</taxon>
    </lineage>
</organism>
<dbReference type="EC" id="2.7.1.35" evidence="1 4"/>
<dbReference type="EMBL" id="U53700">
    <property type="protein sequence ID" value="AAC44166.1"/>
    <property type="molecule type" value="Genomic_DNA"/>
</dbReference>
<dbReference type="EMBL" id="U00096">
    <property type="protein sequence ID" value="AAC75471.1"/>
    <property type="molecule type" value="Genomic_DNA"/>
</dbReference>
<dbReference type="EMBL" id="AP009048">
    <property type="protein sequence ID" value="BAA16292.1"/>
    <property type="molecule type" value="Genomic_DNA"/>
</dbReference>
<dbReference type="EMBL" id="M21994">
    <property type="status" value="NOT_ANNOTATED_CDS"/>
    <property type="molecule type" value="Genomic_DNA"/>
</dbReference>
<dbReference type="EMBL" id="J02796">
    <property type="status" value="NOT_ANNOTATED_CDS"/>
    <property type="molecule type" value="Genomic_DNA"/>
</dbReference>
<dbReference type="PIR" id="A65016">
    <property type="entry name" value="A65016"/>
</dbReference>
<dbReference type="RefSeq" id="NP_416913.1">
    <property type="nucleotide sequence ID" value="NC_000913.3"/>
</dbReference>
<dbReference type="RefSeq" id="WP_000096674.1">
    <property type="nucleotide sequence ID" value="NZ_LN832404.1"/>
</dbReference>
<dbReference type="PDB" id="2DDM">
    <property type="method" value="X-ray"/>
    <property type="resolution" value="2.10 A"/>
    <property type="chains" value="A/B=1-283"/>
</dbReference>
<dbReference type="PDB" id="2DDO">
    <property type="method" value="X-ray"/>
    <property type="resolution" value="2.60 A"/>
    <property type="chains" value="A/B=1-283"/>
</dbReference>
<dbReference type="PDB" id="2DDW">
    <property type="method" value="X-ray"/>
    <property type="resolution" value="3.20 A"/>
    <property type="chains" value="A/B=1-283"/>
</dbReference>
<dbReference type="PDBsum" id="2DDM"/>
<dbReference type="PDBsum" id="2DDO"/>
<dbReference type="PDBsum" id="2DDW"/>
<dbReference type="SMR" id="P40191"/>
<dbReference type="BioGRID" id="4260568">
    <property type="interactions" value="23"/>
</dbReference>
<dbReference type="BioGRID" id="851221">
    <property type="interactions" value="4"/>
</dbReference>
<dbReference type="FunCoup" id="P40191">
    <property type="interactions" value="178"/>
</dbReference>
<dbReference type="IntAct" id="P40191">
    <property type="interactions" value="6"/>
</dbReference>
<dbReference type="STRING" id="511145.b2418"/>
<dbReference type="jPOST" id="P40191"/>
<dbReference type="PaxDb" id="511145-b2418"/>
<dbReference type="EnsemblBacteria" id="AAC75471">
    <property type="protein sequence ID" value="AAC75471"/>
    <property type="gene ID" value="b2418"/>
</dbReference>
<dbReference type="GeneID" id="946881"/>
<dbReference type="KEGG" id="ecj:JW2411"/>
<dbReference type="KEGG" id="eco:b2418"/>
<dbReference type="KEGG" id="ecoc:C3026_13440"/>
<dbReference type="PATRIC" id="fig|1411691.4.peg.4313"/>
<dbReference type="EchoBASE" id="EB2519"/>
<dbReference type="eggNOG" id="COG2240">
    <property type="taxonomic scope" value="Bacteria"/>
</dbReference>
<dbReference type="HOGENOM" id="CLU_046496_3_1_6"/>
<dbReference type="InParanoid" id="P40191"/>
<dbReference type="OMA" id="AWTHQHP"/>
<dbReference type="OrthoDB" id="9800808at2"/>
<dbReference type="PhylomeDB" id="P40191"/>
<dbReference type="BioCyc" id="EcoCyc:PDXK-MONOMER"/>
<dbReference type="BioCyc" id="MetaCyc:PDXK-MONOMER"/>
<dbReference type="BRENDA" id="2.7.1.35">
    <property type="organism ID" value="2026"/>
</dbReference>
<dbReference type="UniPathway" id="UPA01068">
    <property type="reaction ID" value="UER00298"/>
</dbReference>
<dbReference type="UniPathway" id="UPA01068">
    <property type="reaction ID" value="UER00299"/>
</dbReference>
<dbReference type="UniPathway" id="UPA01068">
    <property type="reaction ID" value="UER00300"/>
</dbReference>
<dbReference type="EvolutionaryTrace" id="P40191"/>
<dbReference type="PRO" id="PR:P40191"/>
<dbReference type="Proteomes" id="UP000000625">
    <property type="component" value="Chromosome"/>
</dbReference>
<dbReference type="GO" id="GO:0005829">
    <property type="term" value="C:cytosol"/>
    <property type="evidence" value="ECO:0000314"/>
    <property type="project" value="EcoCyc"/>
</dbReference>
<dbReference type="GO" id="GO:0005524">
    <property type="term" value="F:ATP binding"/>
    <property type="evidence" value="ECO:0007669"/>
    <property type="project" value="UniProtKB-UniRule"/>
</dbReference>
<dbReference type="GO" id="GO:0008902">
    <property type="term" value="F:hydroxymethylpyrimidine kinase activity"/>
    <property type="evidence" value="ECO:0000314"/>
    <property type="project" value="EcoCyc"/>
</dbReference>
<dbReference type="GO" id="GO:0000287">
    <property type="term" value="F:magnesium ion binding"/>
    <property type="evidence" value="ECO:0000314"/>
    <property type="project" value="EcoCyc"/>
</dbReference>
<dbReference type="GO" id="GO:0042803">
    <property type="term" value="F:protein homodimerization activity"/>
    <property type="evidence" value="ECO:0000314"/>
    <property type="project" value="EcoCyc"/>
</dbReference>
<dbReference type="GO" id="GO:0008478">
    <property type="term" value="F:pyridoxal kinase activity"/>
    <property type="evidence" value="ECO:0000314"/>
    <property type="project" value="EcoCyc"/>
</dbReference>
<dbReference type="GO" id="GO:0030170">
    <property type="term" value="F:pyridoxal phosphate binding"/>
    <property type="evidence" value="ECO:0000314"/>
    <property type="project" value="EcoCyc"/>
</dbReference>
<dbReference type="GO" id="GO:0008270">
    <property type="term" value="F:zinc ion binding"/>
    <property type="evidence" value="ECO:0007669"/>
    <property type="project" value="UniProtKB-UniRule"/>
</dbReference>
<dbReference type="GO" id="GO:0009443">
    <property type="term" value="P:pyridoxal 5'-phosphate salvage"/>
    <property type="evidence" value="ECO:0000315"/>
    <property type="project" value="EcoCyc"/>
</dbReference>
<dbReference type="GO" id="GO:0036172">
    <property type="term" value="P:thiamine salvage"/>
    <property type="evidence" value="ECO:0000316"/>
    <property type="project" value="EcoCyc"/>
</dbReference>
<dbReference type="CDD" id="cd01173">
    <property type="entry name" value="pyridoxal_pyridoxamine_kinase"/>
    <property type="match status" value="1"/>
</dbReference>
<dbReference type="FunFam" id="3.40.1190.20:FF:000009">
    <property type="entry name" value="Pyridoxine/pyridoxal/pyridoxamine kinase"/>
    <property type="match status" value="1"/>
</dbReference>
<dbReference type="Gene3D" id="3.40.1190.20">
    <property type="match status" value="1"/>
</dbReference>
<dbReference type="HAMAP" id="MF_01638">
    <property type="entry name" value="PdxK"/>
    <property type="match status" value="1"/>
</dbReference>
<dbReference type="InterPro" id="IPR023479">
    <property type="entry name" value="PdxK"/>
</dbReference>
<dbReference type="InterPro" id="IPR013749">
    <property type="entry name" value="PM/HMP-P_kinase-1"/>
</dbReference>
<dbReference type="InterPro" id="IPR004625">
    <property type="entry name" value="PyrdxlKinase"/>
</dbReference>
<dbReference type="InterPro" id="IPR029056">
    <property type="entry name" value="Ribokinase-like"/>
</dbReference>
<dbReference type="NCBIfam" id="NF006034">
    <property type="entry name" value="PRK08176.1"/>
    <property type="match status" value="1"/>
</dbReference>
<dbReference type="NCBIfam" id="TIGR00687">
    <property type="entry name" value="pyridox_kin"/>
    <property type="match status" value="1"/>
</dbReference>
<dbReference type="PANTHER" id="PTHR10534">
    <property type="entry name" value="PYRIDOXAL KINASE"/>
    <property type="match status" value="1"/>
</dbReference>
<dbReference type="PANTHER" id="PTHR10534:SF15">
    <property type="entry name" value="PYRIDOXINE_PYRIDOXAL_PYRIDOXAMINE KINASE"/>
    <property type="match status" value="1"/>
</dbReference>
<dbReference type="Pfam" id="PF08543">
    <property type="entry name" value="Phos_pyr_kin"/>
    <property type="match status" value="1"/>
</dbReference>
<dbReference type="SUPFAM" id="SSF53613">
    <property type="entry name" value="Ribokinase-like"/>
    <property type="match status" value="1"/>
</dbReference>
<proteinExistence type="evidence at protein level"/>
<name>PDXK_ECOLI</name>
<sequence length="283" mass="30847">MSSLLLFNDKSRALQADIVAVQSQVVYGSVGNSIAVPAIKQNGLNVFAVPTVLLSNTPHYDTFYGGAIPDEWFSGYLRALQERDALRQLRAVTTGYMGTASQIKILAEWLTALRKDHPDLLIMVDPVIGDIDSGIYVKPDLPEAYRQYLLPLAQGITPNIFELEILTGKNCRDLDSAIAAAKSLLSDTLKWVVVTSASGNEENQEMQVVVVTADSVNVISHSRVKTDLKGTGDLFCAQLISGLLKGKALTDAVHRAGLRVLEVMRYTQQHESDELILPPLAEA</sequence>
<accession>P40191</accession>
<accession>P76964</accession>
<evidence type="ECO:0000269" key="1">
    <source>
    </source>
</evidence>
<evidence type="ECO:0000269" key="2">
    <source>
    </source>
</evidence>
<evidence type="ECO:0000269" key="3">
    <source>
    </source>
</evidence>
<evidence type="ECO:0000269" key="4">
    <source>
    </source>
</evidence>
<evidence type="ECO:0000303" key="5">
    <source>
    </source>
</evidence>
<evidence type="ECO:0000303" key="6">
    <source>
    </source>
</evidence>
<evidence type="ECO:0000303" key="7">
    <source>
    </source>
</evidence>
<evidence type="ECO:0000305" key="8"/>
<evidence type="ECO:0000305" key="9">
    <source>
    </source>
</evidence>
<evidence type="ECO:0000305" key="10">
    <source>
    </source>
</evidence>
<evidence type="ECO:0007744" key="11">
    <source>
        <dbReference type="PDB" id="2DDO"/>
    </source>
</evidence>
<evidence type="ECO:0007744" key="12">
    <source>
        <dbReference type="PDB" id="2DDW"/>
    </source>
</evidence>
<evidence type="ECO:0007829" key="13">
    <source>
        <dbReference type="PDB" id="2DDM"/>
    </source>
</evidence>
<gene>
    <name type="primary">pdxK</name>
    <name type="synonym">yfeI</name>
    <name type="ordered locus">b2418</name>
    <name type="ordered locus">JW2411</name>
</gene>
<protein>
    <recommendedName>
        <fullName evidence="6 7">Pyridoxine/pyridoxal/pyridoxamine kinase</fullName>
        <shortName evidence="6">PN/PL/PM kinase</shortName>
        <ecNumber evidence="1 4">2.7.1.35</ecNumber>
    </recommendedName>
    <alternativeName>
        <fullName evidence="6">B6-vitamer kinase</fullName>
    </alternativeName>
    <alternativeName>
        <fullName evidence="5">Pyridoxal kinase 1</fullName>
        <shortName evidence="5">PL kinase 1</shortName>
    </alternativeName>
</protein>
<feature type="chain" id="PRO_0000213342" description="Pyridoxine/pyridoxal/pyridoxamine kinase">
    <location>
        <begin position="1"/>
        <end position="283"/>
    </location>
</feature>
<feature type="binding site" evidence="2 12">
    <location>
        <position position="23"/>
    </location>
    <ligand>
        <name>substrate</name>
    </ligand>
</feature>
<feature type="binding site" evidence="2 12">
    <location>
        <position position="59"/>
    </location>
    <ligand>
        <name>substrate</name>
    </ligand>
</feature>
<feature type="binding site" evidence="2 11">
    <location>
        <position position="125"/>
    </location>
    <ligand>
        <name>ATP</name>
        <dbReference type="ChEBI" id="CHEBI:30616"/>
    </ligand>
</feature>
<feature type="binding site" evidence="10">
    <location>
        <position position="136"/>
    </location>
    <ligand>
        <name>Mg(2+)</name>
        <dbReference type="ChEBI" id="CHEBI:18420"/>
    </ligand>
</feature>
<feature type="binding site" evidence="2 11">
    <location>
        <position position="157"/>
    </location>
    <ligand>
        <name>ATP</name>
        <dbReference type="ChEBI" id="CHEBI:30616"/>
    </ligand>
</feature>
<feature type="binding site" evidence="2 11">
    <location>
        <position position="162"/>
    </location>
    <ligand>
        <name>ATP</name>
        <dbReference type="ChEBI" id="CHEBI:30616"/>
    </ligand>
</feature>
<feature type="binding site" evidence="2">
    <location>
        <position position="162"/>
    </location>
    <ligand>
        <name>Mg(2+)</name>
        <dbReference type="ChEBI" id="CHEBI:18420"/>
    </ligand>
</feature>
<feature type="binding site" evidence="2 11">
    <location>
        <position position="195"/>
    </location>
    <ligand>
        <name>ATP</name>
        <dbReference type="ChEBI" id="CHEBI:30616"/>
    </ligand>
</feature>
<feature type="binding site" evidence="2 11">
    <location>
        <begin position="221"/>
        <end position="224"/>
    </location>
    <ligand>
        <name>ATP</name>
        <dbReference type="ChEBI" id="CHEBI:30616"/>
    </ligand>
</feature>
<feature type="binding site" evidence="2 11">
    <location>
        <position position="231"/>
    </location>
    <ligand>
        <name>ATP</name>
        <dbReference type="ChEBI" id="CHEBI:30616"/>
    </ligand>
</feature>
<feature type="binding site" evidence="2 12">
    <location>
        <position position="233"/>
    </location>
    <ligand>
        <name>substrate</name>
    </ligand>
</feature>
<feature type="strand" evidence="13">
    <location>
        <begin position="17"/>
        <end position="30"/>
    </location>
</feature>
<feature type="helix" evidence="13">
    <location>
        <begin position="32"/>
        <end position="41"/>
    </location>
</feature>
<feature type="strand" evidence="13">
    <location>
        <begin position="46"/>
        <end position="56"/>
    </location>
</feature>
<feature type="strand" evidence="13">
    <location>
        <begin position="65"/>
        <end position="67"/>
    </location>
</feature>
<feature type="helix" evidence="13">
    <location>
        <begin position="70"/>
        <end position="82"/>
    </location>
</feature>
<feature type="strand" evidence="13">
    <location>
        <begin position="91"/>
        <end position="94"/>
    </location>
</feature>
<feature type="helix" evidence="13">
    <location>
        <begin position="100"/>
        <end position="114"/>
    </location>
</feature>
<feature type="strand" evidence="13">
    <location>
        <begin position="121"/>
        <end position="124"/>
    </location>
</feature>
<feature type="turn" evidence="13">
    <location>
        <begin position="131"/>
        <end position="133"/>
    </location>
</feature>
<feature type="helix" evidence="13">
    <location>
        <begin position="141"/>
        <end position="147"/>
    </location>
</feature>
<feature type="helix" evidence="13">
    <location>
        <begin position="150"/>
        <end position="152"/>
    </location>
</feature>
<feature type="strand" evidence="13">
    <location>
        <begin position="154"/>
        <end position="156"/>
    </location>
</feature>
<feature type="helix" evidence="13">
    <location>
        <begin position="160"/>
        <end position="167"/>
    </location>
</feature>
<feature type="helix" evidence="13">
    <location>
        <begin position="174"/>
        <end position="184"/>
    </location>
</feature>
<feature type="strand" evidence="13">
    <location>
        <begin position="191"/>
        <end position="198"/>
    </location>
</feature>
<feature type="strand" evidence="13">
    <location>
        <begin position="205"/>
        <end position="212"/>
    </location>
</feature>
<feature type="strand" evidence="13">
    <location>
        <begin position="215"/>
        <end position="222"/>
    </location>
</feature>
<feature type="helix" evidence="13">
    <location>
        <begin position="231"/>
        <end position="244"/>
    </location>
</feature>
<feature type="helix" evidence="13">
    <location>
        <begin position="249"/>
        <end position="269"/>
    </location>
</feature>
<comment type="function">
    <text evidence="1 4">B6-vitamer kinase involved in the salvage pathway of pyridoxal 5'-phosphate (PLP). Catalyzes the phosphorylation of pyridoxine (PN), pyridoxal (PL), and pyridoxamine (PM), forming their respective 5'-phosphorylated esters, i.e. PNP, PLP and PMP.</text>
</comment>
<comment type="catalytic activity">
    <reaction evidence="1 4">
        <text>pyridoxal + ATP = pyridoxal 5'-phosphate + ADP + H(+)</text>
        <dbReference type="Rhea" id="RHEA:10224"/>
        <dbReference type="ChEBI" id="CHEBI:15378"/>
        <dbReference type="ChEBI" id="CHEBI:17310"/>
        <dbReference type="ChEBI" id="CHEBI:30616"/>
        <dbReference type="ChEBI" id="CHEBI:456216"/>
        <dbReference type="ChEBI" id="CHEBI:597326"/>
        <dbReference type="EC" id="2.7.1.35"/>
    </reaction>
</comment>
<comment type="catalytic activity">
    <reaction evidence="1 4">
        <text>pyridoxine + ATP = pyridoxine 5'-phosphate + ADP + H(+)</text>
        <dbReference type="Rhea" id="RHEA:25108"/>
        <dbReference type="ChEBI" id="CHEBI:15378"/>
        <dbReference type="ChEBI" id="CHEBI:16709"/>
        <dbReference type="ChEBI" id="CHEBI:30616"/>
        <dbReference type="ChEBI" id="CHEBI:58589"/>
        <dbReference type="ChEBI" id="CHEBI:456216"/>
        <dbReference type="EC" id="2.7.1.35"/>
    </reaction>
</comment>
<comment type="catalytic activity">
    <reaction evidence="1">
        <text>pyridoxamine + ATP = pyridoxamine 5'-phosphate + ADP + H(+)</text>
        <dbReference type="Rhea" id="RHEA:25104"/>
        <dbReference type="ChEBI" id="CHEBI:15378"/>
        <dbReference type="ChEBI" id="CHEBI:30616"/>
        <dbReference type="ChEBI" id="CHEBI:57761"/>
        <dbReference type="ChEBI" id="CHEBI:58451"/>
        <dbReference type="ChEBI" id="CHEBI:456216"/>
        <dbReference type="EC" id="2.7.1.35"/>
    </reaction>
</comment>
<comment type="cofactor">
    <cofactor evidence="1">
        <name>Zn(2+)</name>
        <dbReference type="ChEBI" id="CHEBI:29105"/>
    </cofactor>
    <cofactor evidence="1">
        <name>Mg(2+)</name>
        <dbReference type="ChEBI" id="CHEBI:18420"/>
    </cofactor>
    <text evidence="1">Can use both zinc and magnesium that is complexed with ATP. However, magnesium seems to be the preferred metal used under physiological conditions.</text>
</comment>
<comment type="activity regulation">
    <text evidence="2">Is activated by the monovalent cation potassium.</text>
</comment>
<comment type="biophysicochemical properties">
    <kinetics>
        <KM evidence="1">100 uM for pyridoxal (in the presence of MgATP, at pH 7.3 and 37 degrees Celsius)</KM>
        <KM evidence="2">50 uM for pyridoxal (in the presence of MgATP, at pH 7.3 and 37 degrees Celsius)</KM>
        <KM evidence="1">190 uM for pyridoxal (in the presence of ZnATP, at pH 7.3 and 37 degrees Celsius)</KM>
        <KM evidence="1">25 uM for pyridoxine (in the presence of MgATP, at pH 7.3 and 37 degrees Celsius)</KM>
        <KM evidence="1">30 uM for pyridoxamine (in the presence of MgATP, at pH 7.3 and 37 degrees Celsius)</KM>
        <KM evidence="1">10 uM for pyridoxamine (in the presence of ZnATP, at pH 7.3 and 37 degrees Celsius)</KM>
        <KM evidence="1">600 uM for MgATP (at pH 7.3 and 37 degrees Celsius)</KM>
        <KM evidence="2">450 uM for MgATP (at pH 7.3 and 37 degrees Celsius)</KM>
        <KM evidence="1">2100 uM for MgATP (at pH 6.1 and 37 degrees Celsius)</KM>
        <KM evidence="1">70 uM for ZnATP (in the presence of pyridoxal, at pH 7.3 and 37 degrees Celsius)</KM>
        <KM evidence="1">45 uM for ZnATP (in the presence of pyridoxamine, at pH 7.3 and 37 degrees Celsius)</KM>
        <text evidence="1 2">kcat is 140 min(-1) for the phosphorylation of PL with MgATP. kcat is 120 min(-1) for the phosphorylation of PL with ZnATP. kcat is 20 min(-1) for the phosphorylation of PN with MgATP. kcat is 40 min(-1) for the phosphorylation of PM with MgATP. kcat is 25 min(-1) for the phosphorylation of PM with ZnATP (at pH 7.3 and 37 degrees Celsius) (PubMed:15249053). kcat is 250 min(-1) for the phosphorylation of PL with MgATP (at pH 7.3 and 37 degrees Celsius) (PubMed:16740960).</text>
    </kinetics>
</comment>
<comment type="pathway">
    <text evidence="4">Cofactor metabolism; pyridoxal 5'-phosphate salvage; pyridoxal 5'-phosphate from pyridoxal: step 1/1.</text>
</comment>
<comment type="pathway">
    <text evidence="4">Cofactor metabolism; pyridoxal 5'-phosphate salvage; pyridoxine 5'-phosphate from pyridoxine: step 1/1.</text>
</comment>
<comment type="pathway">
    <text evidence="9">Cofactor metabolism; pyridoxal 5'-phosphate salvage; pyridoxamine 5'-phosphate from pyridoxamine: step 1/1.</text>
</comment>
<comment type="subunit">
    <text evidence="2">Homodimer.</text>
</comment>
<comment type="disruption phenotype">
    <text evidence="3 4">Cells lacking this gene lack pyridoxine kinase activity but still contain pyridoxal kinase activity (PubMed:8764513). Cells lacking this gene and cells lacking both pdxY and pdxK are not auxotrophs, meaning that the de novo pathway of PLP biosynthesis is functional. For PLP salvage, the pdxY single mutant can use both pyridoxine and pyridoxal, the pdxK single mutant can use pyridoxal but not pyridoxine, and the double mutant can no longer use both compounds (PubMed:9537380).</text>
</comment>
<comment type="similarity">
    <text evidence="8">Belongs to the pyridoxine kinase family. PdxK subfamily.</text>
</comment>
<reference key="1">
    <citation type="journal article" date="1996" name="FEMS Microbiol. Lett.">
        <title>Identification of the pdxK gene that encodes pyridoxine (vitamin B6) kinase in Escherichia coli K-12.</title>
        <authorList>
            <person name="Yang Y."/>
            <person name="Zhao G."/>
            <person name="Winkler M.E."/>
        </authorList>
    </citation>
    <scope>NUCLEOTIDE SEQUENCE [GENOMIC DNA]</scope>
    <scope>FUNCTION</scope>
    <scope>DISRUPTION PHENOTYPE</scope>
    <source>
        <strain>K12 / W3110 / ATCC 27325 / DSM 5911</strain>
    </source>
</reference>
<reference key="2">
    <citation type="journal article" date="1997" name="DNA Res.">
        <title>Construction of a contiguous 874-kb sequence of the Escherichia coli-K12 genome corresponding to 50.0-68.8 min on the linkage map and analysis of its sequence features.</title>
        <authorList>
            <person name="Yamamoto Y."/>
            <person name="Aiba H."/>
            <person name="Baba T."/>
            <person name="Hayashi K."/>
            <person name="Inada T."/>
            <person name="Isono K."/>
            <person name="Itoh T."/>
            <person name="Kimura S."/>
            <person name="Kitagawa M."/>
            <person name="Makino K."/>
            <person name="Miki T."/>
            <person name="Mitsuhashi N."/>
            <person name="Mizobuchi K."/>
            <person name="Mori H."/>
            <person name="Nakade S."/>
            <person name="Nakamura Y."/>
            <person name="Nashimoto H."/>
            <person name="Oshima T."/>
            <person name="Oyama S."/>
            <person name="Saito N."/>
            <person name="Sampei G."/>
            <person name="Satoh Y."/>
            <person name="Sivasundaram S."/>
            <person name="Tagami H."/>
            <person name="Takahashi H."/>
            <person name="Takeda J."/>
            <person name="Takemoto K."/>
            <person name="Uehara K."/>
            <person name="Wada C."/>
            <person name="Yamagata S."/>
            <person name="Horiuchi T."/>
        </authorList>
    </citation>
    <scope>NUCLEOTIDE SEQUENCE [LARGE SCALE GENOMIC DNA]</scope>
    <source>
        <strain>K12 / W3110 / ATCC 27325 / DSM 5911</strain>
    </source>
</reference>
<reference key="3">
    <citation type="journal article" date="1997" name="Science">
        <title>The complete genome sequence of Escherichia coli K-12.</title>
        <authorList>
            <person name="Blattner F.R."/>
            <person name="Plunkett G. III"/>
            <person name="Bloch C.A."/>
            <person name="Perna N.T."/>
            <person name="Burland V."/>
            <person name="Riley M."/>
            <person name="Collado-Vides J."/>
            <person name="Glasner J.D."/>
            <person name="Rode C.K."/>
            <person name="Mayhew G.F."/>
            <person name="Gregor J."/>
            <person name="Davis N.W."/>
            <person name="Kirkpatrick H.A."/>
            <person name="Goeden M.A."/>
            <person name="Rose D.J."/>
            <person name="Mau B."/>
            <person name="Shao Y."/>
        </authorList>
    </citation>
    <scope>NUCLEOTIDE SEQUENCE [LARGE SCALE GENOMIC DNA]</scope>
    <source>
        <strain>K12 / MG1655 / ATCC 47076</strain>
    </source>
</reference>
<reference key="4">
    <citation type="journal article" date="2006" name="Mol. Syst. Biol.">
        <title>Highly accurate genome sequences of Escherichia coli K-12 strains MG1655 and W3110.</title>
        <authorList>
            <person name="Hayashi K."/>
            <person name="Morooka N."/>
            <person name="Yamamoto Y."/>
            <person name="Fujita K."/>
            <person name="Isono K."/>
            <person name="Choi S."/>
            <person name="Ohtsubo E."/>
            <person name="Baba T."/>
            <person name="Wanner B.L."/>
            <person name="Mori H."/>
            <person name="Horiuchi T."/>
        </authorList>
    </citation>
    <scope>NUCLEOTIDE SEQUENCE [LARGE SCALE GENOMIC DNA]</scope>
    <source>
        <strain>K12 / W3110 / ATCC 27325 / DSM 5911</strain>
    </source>
</reference>
<reference key="5">
    <citation type="journal article" date="1988" name="J. Bacteriol.">
        <title>The ptsH, ptsI, and crr genes of the Escherichia coli phosphoenolpyruvate-dependent phosphotransferase system: a complex operon with several modes of transcription.</title>
        <authorList>
            <person name="de Reuse H."/>
            <person name="Danchin A."/>
        </authorList>
    </citation>
    <scope>NUCLEOTIDE SEQUENCE [GENOMIC DNA] OF 250-283</scope>
</reference>
<reference key="6">
    <citation type="journal article" date="1987" name="J. Biol. Chem.">
        <title>Sugar transport by the bacterial phosphotransferase system. Molecular cloning and structural analysis of the Escherichia coli ptsH, ptsI, and crr genes.</title>
        <authorList>
            <person name="Saffen D.W."/>
            <person name="Presper K.A."/>
            <person name="Doering T.L."/>
            <person name="Roseman S."/>
        </authorList>
    </citation>
    <scope>NUCLEOTIDE SEQUENCE [GENOMIC DNA] OF 280-283</scope>
</reference>
<reference key="7">
    <citation type="journal article" date="1998" name="J. Bacteriol.">
        <title>Identification and function of the pdxY gene, which encodes a novel pyridoxal kinase involved in the salvage pathway of pyridoxal 5'-phosphate biosynthesis in Escherichia coli K-12.</title>
        <authorList>
            <person name="Yang Y."/>
            <person name="Tsui H.C."/>
            <person name="Man T.K."/>
            <person name="Winkler M.E."/>
        </authorList>
    </citation>
    <scope>FUNCTION</scope>
    <scope>CATALYTIC ACTIVITY</scope>
    <scope>DISRUPTION PHENOTYPE</scope>
    <scope>PATHWAY</scope>
    <source>
        <strain>K12</strain>
    </source>
</reference>
<reference key="8">
    <citation type="journal article" date="2004" name="Protein Expr. Purif.">
        <title>Expression, purification, and kinetic constants for human and Escherichia coli pyridoxal kinases.</title>
        <authorList>
            <person name="di Salvo M.L."/>
            <person name="Hunt S."/>
            <person name="Schirch V."/>
        </authorList>
    </citation>
    <scope>FUNCTION</scope>
    <scope>CATALYTIC ACTIVITY</scope>
    <scope>BIOPHYSICOCHEMICAL PROPERTIES</scope>
    <scope>COFACTOR</scope>
</reference>
<reference key="9">
    <citation type="journal article" date="2006" name="J. Bacteriol.">
        <title>Crystal structure of pyridoxal kinase from the Escherichia coli pdxK gene: implications for the classification of pyridoxal kinases.</title>
        <authorList>
            <person name="Safo M.K."/>
            <person name="Musayev F.N."/>
            <person name="di Salvo M.L."/>
            <person name="Hunt S."/>
            <person name="Claude J.B."/>
            <person name="Schirch V."/>
        </authorList>
    </citation>
    <scope>X-RAY CRYSTALLOGRAPHY (2.10 ANGSTROMS) OF APOENZYME AND IN COMPLEXES WITH MG-ATP AND PYRIDOXAL</scope>
    <scope>BIOPHYSICOCHEMICAL PROPERTIES</scope>
    <scope>ACTIVITY REGULATION</scope>
    <scope>SUBUNIT</scope>
</reference>
<keyword id="KW-0002">3D-structure</keyword>
<keyword id="KW-0067">ATP-binding</keyword>
<keyword id="KW-0418">Kinase</keyword>
<keyword id="KW-0460">Magnesium</keyword>
<keyword id="KW-0479">Metal-binding</keyword>
<keyword id="KW-0547">Nucleotide-binding</keyword>
<keyword id="KW-1185">Reference proteome</keyword>
<keyword id="KW-0808">Transferase</keyword>
<keyword id="KW-0862">Zinc</keyword>